<protein>
    <recommendedName>
        <fullName evidence="1">Octanoyltransferase</fullName>
        <ecNumber evidence="1">2.3.1.181</ecNumber>
    </recommendedName>
    <alternativeName>
        <fullName evidence="1">Lipoate-protein ligase B</fullName>
    </alternativeName>
    <alternativeName>
        <fullName evidence="1">Lipoyl/octanoyl transferase</fullName>
    </alternativeName>
    <alternativeName>
        <fullName evidence="1">Octanoyl-[acyl-carrier-protein]-protein N-octanoyltransferase</fullName>
    </alternativeName>
</protein>
<name>LIPB_DESRM</name>
<dbReference type="EC" id="2.3.1.181" evidence="1"/>
<dbReference type="EMBL" id="CP000612">
    <property type="protein sequence ID" value="ABO49149.1"/>
    <property type="molecule type" value="Genomic_DNA"/>
</dbReference>
<dbReference type="RefSeq" id="WP_011876986.1">
    <property type="nucleotide sequence ID" value="NC_009253.1"/>
</dbReference>
<dbReference type="SMR" id="A4J246"/>
<dbReference type="STRING" id="349161.Dred_0609"/>
<dbReference type="KEGG" id="drm:Dred_0609"/>
<dbReference type="eggNOG" id="COG0321">
    <property type="taxonomic scope" value="Bacteria"/>
</dbReference>
<dbReference type="HOGENOM" id="CLU_035168_1_3_9"/>
<dbReference type="OrthoDB" id="9787061at2"/>
<dbReference type="UniPathway" id="UPA00538">
    <property type="reaction ID" value="UER00592"/>
</dbReference>
<dbReference type="Proteomes" id="UP000001556">
    <property type="component" value="Chromosome"/>
</dbReference>
<dbReference type="GO" id="GO:0005737">
    <property type="term" value="C:cytoplasm"/>
    <property type="evidence" value="ECO:0007669"/>
    <property type="project" value="UniProtKB-SubCell"/>
</dbReference>
<dbReference type="GO" id="GO:0033819">
    <property type="term" value="F:lipoyl(octanoyl) transferase activity"/>
    <property type="evidence" value="ECO:0007669"/>
    <property type="project" value="UniProtKB-EC"/>
</dbReference>
<dbReference type="GO" id="GO:0036211">
    <property type="term" value="P:protein modification process"/>
    <property type="evidence" value="ECO:0007669"/>
    <property type="project" value="InterPro"/>
</dbReference>
<dbReference type="CDD" id="cd16444">
    <property type="entry name" value="LipB"/>
    <property type="match status" value="1"/>
</dbReference>
<dbReference type="Gene3D" id="3.30.930.10">
    <property type="entry name" value="Bira Bifunctional Protein, Domain 2"/>
    <property type="match status" value="1"/>
</dbReference>
<dbReference type="HAMAP" id="MF_00013">
    <property type="entry name" value="LipB"/>
    <property type="match status" value="1"/>
</dbReference>
<dbReference type="InterPro" id="IPR045864">
    <property type="entry name" value="aa-tRNA-synth_II/BPL/LPL"/>
</dbReference>
<dbReference type="InterPro" id="IPR004143">
    <property type="entry name" value="BPL_LPL_catalytic"/>
</dbReference>
<dbReference type="InterPro" id="IPR000544">
    <property type="entry name" value="Octanoyltransferase"/>
</dbReference>
<dbReference type="InterPro" id="IPR020605">
    <property type="entry name" value="Octanoyltransferase_CS"/>
</dbReference>
<dbReference type="NCBIfam" id="TIGR00214">
    <property type="entry name" value="lipB"/>
    <property type="match status" value="1"/>
</dbReference>
<dbReference type="NCBIfam" id="NF010925">
    <property type="entry name" value="PRK14345.1"/>
    <property type="match status" value="1"/>
</dbReference>
<dbReference type="PANTHER" id="PTHR10993:SF7">
    <property type="entry name" value="LIPOYLTRANSFERASE 2, MITOCHONDRIAL-RELATED"/>
    <property type="match status" value="1"/>
</dbReference>
<dbReference type="PANTHER" id="PTHR10993">
    <property type="entry name" value="OCTANOYLTRANSFERASE"/>
    <property type="match status" value="1"/>
</dbReference>
<dbReference type="Pfam" id="PF21948">
    <property type="entry name" value="LplA-B_cat"/>
    <property type="match status" value="1"/>
</dbReference>
<dbReference type="PIRSF" id="PIRSF016262">
    <property type="entry name" value="LPLase"/>
    <property type="match status" value="1"/>
</dbReference>
<dbReference type="SUPFAM" id="SSF55681">
    <property type="entry name" value="Class II aaRS and biotin synthetases"/>
    <property type="match status" value="1"/>
</dbReference>
<dbReference type="PROSITE" id="PS51733">
    <property type="entry name" value="BPL_LPL_CATALYTIC"/>
    <property type="match status" value="1"/>
</dbReference>
<dbReference type="PROSITE" id="PS01313">
    <property type="entry name" value="LIPB"/>
    <property type="match status" value="1"/>
</dbReference>
<reference key="1">
    <citation type="submission" date="2007-03" db="EMBL/GenBank/DDBJ databases">
        <title>Complete sequence of Desulfotomaculum reducens MI-1.</title>
        <authorList>
            <consortium name="US DOE Joint Genome Institute"/>
            <person name="Copeland A."/>
            <person name="Lucas S."/>
            <person name="Lapidus A."/>
            <person name="Barry K."/>
            <person name="Detter J.C."/>
            <person name="Glavina del Rio T."/>
            <person name="Hammon N."/>
            <person name="Israni S."/>
            <person name="Dalin E."/>
            <person name="Tice H."/>
            <person name="Pitluck S."/>
            <person name="Sims D."/>
            <person name="Brettin T."/>
            <person name="Bruce D."/>
            <person name="Han C."/>
            <person name="Tapia R."/>
            <person name="Schmutz J."/>
            <person name="Larimer F."/>
            <person name="Land M."/>
            <person name="Hauser L."/>
            <person name="Kyrpides N."/>
            <person name="Kim E."/>
            <person name="Tebo B.M."/>
            <person name="Richardson P."/>
        </authorList>
    </citation>
    <scope>NUCLEOTIDE SEQUENCE [LARGE SCALE GENOMIC DNA]</scope>
    <source>
        <strain>ATCC BAA-1160 / DSM 100696 / MI-1</strain>
    </source>
</reference>
<sequence>MKLFVAKLGEIDYQDALTMQEKLLLLRQQNKVEDIMLLLQHPPTLTLGTRENRYNILVPEVELKRQGVNIFKSNRGGDVTYHGPGQIVGYPIVDLNGHGKSIREYVHKIEETFIQLLKEEYDLTASRESKYHGVWLGNEKITAIGCAVKRWVTMHGFAFNVNTNLSHFNLINPCGITDRGVTSLQKIFGQPQDMEKVYKQVITYFSRVFDFEPEIIDDKKLNEIVGRE</sequence>
<gene>
    <name evidence="1" type="primary">lipB</name>
    <name type="ordered locus">Dred_0609</name>
</gene>
<accession>A4J246</accession>
<evidence type="ECO:0000255" key="1">
    <source>
        <dbReference type="HAMAP-Rule" id="MF_00013"/>
    </source>
</evidence>
<evidence type="ECO:0000255" key="2">
    <source>
        <dbReference type="PROSITE-ProRule" id="PRU01067"/>
    </source>
</evidence>
<keyword id="KW-0012">Acyltransferase</keyword>
<keyword id="KW-0963">Cytoplasm</keyword>
<keyword id="KW-1185">Reference proteome</keyword>
<keyword id="KW-0808">Transferase</keyword>
<proteinExistence type="inferred from homology"/>
<comment type="function">
    <text evidence="1">Catalyzes the transfer of endogenously produced octanoic acid from octanoyl-acyl-carrier-protein onto the lipoyl domains of lipoate-dependent enzymes. Lipoyl-ACP can also act as a substrate although octanoyl-ACP is likely to be the physiological substrate.</text>
</comment>
<comment type="catalytic activity">
    <reaction evidence="1">
        <text>octanoyl-[ACP] + L-lysyl-[protein] = N(6)-octanoyl-L-lysyl-[protein] + holo-[ACP] + H(+)</text>
        <dbReference type="Rhea" id="RHEA:17665"/>
        <dbReference type="Rhea" id="RHEA-COMP:9636"/>
        <dbReference type="Rhea" id="RHEA-COMP:9685"/>
        <dbReference type="Rhea" id="RHEA-COMP:9752"/>
        <dbReference type="Rhea" id="RHEA-COMP:9928"/>
        <dbReference type="ChEBI" id="CHEBI:15378"/>
        <dbReference type="ChEBI" id="CHEBI:29969"/>
        <dbReference type="ChEBI" id="CHEBI:64479"/>
        <dbReference type="ChEBI" id="CHEBI:78463"/>
        <dbReference type="ChEBI" id="CHEBI:78809"/>
        <dbReference type="EC" id="2.3.1.181"/>
    </reaction>
</comment>
<comment type="pathway">
    <text evidence="1">Protein modification; protein lipoylation via endogenous pathway; protein N(6)-(lipoyl)lysine from octanoyl-[acyl-carrier-protein]: step 1/2.</text>
</comment>
<comment type="subcellular location">
    <subcellularLocation>
        <location evidence="1">Cytoplasm</location>
    </subcellularLocation>
</comment>
<comment type="miscellaneous">
    <text evidence="1">In the reaction, the free carboxyl group of octanoic acid is attached via an amide linkage to the epsilon-amino group of a specific lysine residue of lipoyl domains of lipoate-dependent enzymes.</text>
</comment>
<comment type="similarity">
    <text evidence="1">Belongs to the LipB family.</text>
</comment>
<organism>
    <name type="scientific">Desulforamulus reducens (strain ATCC BAA-1160 / DSM 100696 / MI-1)</name>
    <name type="common">Desulfotomaculum reducens</name>
    <dbReference type="NCBI Taxonomy" id="349161"/>
    <lineage>
        <taxon>Bacteria</taxon>
        <taxon>Bacillati</taxon>
        <taxon>Bacillota</taxon>
        <taxon>Clostridia</taxon>
        <taxon>Eubacteriales</taxon>
        <taxon>Peptococcaceae</taxon>
        <taxon>Desulforamulus</taxon>
    </lineage>
</organism>
<feature type="chain" id="PRO_1000070956" description="Octanoyltransferase">
    <location>
        <begin position="1"/>
        <end position="228"/>
    </location>
</feature>
<feature type="domain" description="BPL/LPL catalytic" evidence="2">
    <location>
        <begin position="30"/>
        <end position="213"/>
    </location>
</feature>
<feature type="active site" description="Acyl-thioester intermediate" evidence="1">
    <location>
        <position position="174"/>
    </location>
</feature>
<feature type="binding site" evidence="1">
    <location>
        <begin position="75"/>
        <end position="82"/>
    </location>
    <ligand>
        <name>substrate</name>
    </ligand>
</feature>
<feature type="binding site" evidence="1">
    <location>
        <begin position="143"/>
        <end position="145"/>
    </location>
    <ligand>
        <name>substrate</name>
    </ligand>
</feature>
<feature type="binding site" evidence="1">
    <location>
        <begin position="156"/>
        <end position="158"/>
    </location>
    <ligand>
        <name>substrate</name>
    </ligand>
</feature>
<feature type="site" description="Lowers pKa of active site Cys" evidence="1">
    <location>
        <position position="140"/>
    </location>
</feature>